<feature type="signal peptide">
    <location>
        <begin position="1"/>
        <end position="22"/>
    </location>
</feature>
<feature type="chain" id="PRO_0000033394" description="Invertase">
    <location>
        <begin position="23"/>
        <end position="533"/>
    </location>
</feature>
<feature type="active site" evidence="3">
    <location>
        <position position="50"/>
    </location>
</feature>
<feature type="binding site" evidence="1">
    <location>
        <begin position="47"/>
        <end position="50"/>
    </location>
    <ligand>
        <name>substrate</name>
    </ligand>
</feature>
<feature type="binding site" evidence="1">
    <location>
        <position position="68"/>
    </location>
    <ligand>
        <name>substrate</name>
    </ligand>
</feature>
<feature type="binding site" evidence="1">
    <location>
        <begin position="110"/>
        <end position="111"/>
    </location>
    <ligand>
        <name>substrate</name>
    </ligand>
</feature>
<feature type="binding site" evidence="1">
    <location>
        <begin position="178"/>
        <end position="179"/>
    </location>
    <ligand>
        <name>substrate</name>
    </ligand>
</feature>
<feature type="binding site" evidence="1">
    <location>
        <position position="314"/>
    </location>
    <ligand>
        <name>substrate</name>
    </ligand>
</feature>
<feature type="glycosylation site" description="N-linked (GlcNAc...) asparagine" evidence="2">
    <location>
        <position position="72"/>
    </location>
</feature>
<feature type="glycosylation site" description="N-linked (GlcNAc...) asparagine" evidence="2">
    <location>
        <position position="119"/>
    </location>
</feature>
<feature type="glycosylation site" description="N-linked (GlcNAc...) asparagine" evidence="2">
    <location>
        <position position="120"/>
    </location>
</feature>
<feature type="glycosylation site" description="N-linked (GlcNAc...) asparagine" evidence="2">
    <location>
        <position position="126"/>
    </location>
</feature>
<feature type="glycosylation site" description="N-linked (GlcNAc...) asparagine" evidence="2">
    <location>
        <position position="219"/>
    </location>
</feature>
<feature type="glycosylation site" description="N-linked (GlcNAc...) asparagine" evidence="2">
    <location>
        <position position="334"/>
    </location>
</feature>
<feature type="glycosylation site" description="N-linked (GlcNAc...) asparagine" evidence="2">
    <location>
        <position position="392"/>
    </location>
</feature>
<feature type="glycosylation site" description="N-linked (GlcNAc...) asparagine" evidence="2">
    <location>
        <position position="419"/>
    </location>
</feature>
<feature type="helix" evidence="5">
    <location>
        <begin position="32"/>
        <end position="35"/>
    </location>
</feature>
<feature type="strand" evidence="5">
    <location>
        <begin position="38"/>
        <end position="40"/>
    </location>
</feature>
<feature type="strand" evidence="5">
    <location>
        <begin position="44"/>
        <end position="57"/>
    </location>
</feature>
<feature type="turn" evidence="5">
    <location>
        <begin position="58"/>
        <end position="61"/>
    </location>
</feature>
<feature type="strand" evidence="5">
    <location>
        <begin position="62"/>
        <end position="70"/>
    </location>
</feature>
<feature type="strand" evidence="5">
    <location>
        <begin position="78"/>
        <end position="92"/>
    </location>
</feature>
<feature type="strand" evidence="5">
    <location>
        <begin position="108"/>
        <end position="116"/>
    </location>
</feature>
<feature type="helix" evidence="5">
    <location>
        <begin position="131"/>
        <end position="133"/>
    </location>
</feature>
<feature type="strand" evidence="5">
    <location>
        <begin position="135"/>
        <end position="143"/>
    </location>
</feature>
<feature type="strand" evidence="5">
    <location>
        <begin position="146"/>
        <end position="160"/>
    </location>
</feature>
<feature type="strand" evidence="6">
    <location>
        <begin position="169"/>
        <end position="176"/>
    </location>
</feature>
<feature type="strand" evidence="5">
    <location>
        <begin position="178"/>
        <end position="185"/>
    </location>
</feature>
<feature type="turn" evidence="5">
    <location>
        <begin position="186"/>
        <end position="189"/>
    </location>
</feature>
<feature type="strand" evidence="5">
    <location>
        <begin position="190"/>
        <end position="197"/>
    </location>
</feature>
<feature type="helix" evidence="5">
    <location>
        <begin position="198"/>
        <end position="200"/>
    </location>
</feature>
<feature type="strand" evidence="5">
    <location>
        <begin position="202"/>
        <end position="213"/>
    </location>
</feature>
<feature type="strand" evidence="5">
    <location>
        <begin position="215"/>
        <end position="220"/>
    </location>
</feature>
<feature type="strand" evidence="5">
    <location>
        <begin position="229"/>
        <end position="239"/>
    </location>
</feature>
<feature type="strand" evidence="5">
    <location>
        <begin position="245"/>
        <end position="253"/>
    </location>
</feature>
<feature type="strand" evidence="5">
    <location>
        <begin position="263"/>
        <end position="271"/>
    </location>
</feature>
<feature type="strand" evidence="5">
    <location>
        <begin position="276"/>
        <end position="280"/>
    </location>
</feature>
<feature type="strand" evidence="5">
    <location>
        <begin position="284"/>
        <end position="286"/>
    </location>
</feature>
<feature type="strand" evidence="5">
    <location>
        <begin position="289"/>
        <end position="291"/>
    </location>
</feature>
<feature type="strand" evidence="5">
    <location>
        <begin position="293"/>
        <end position="297"/>
    </location>
</feature>
<feature type="strand" evidence="5">
    <location>
        <begin position="302"/>
        <end position="310"/>
    </location>
</feature>
<feature type="turn" evidence="5">
    <location>
        <begin position="314"/>
        <end position="319"/>
    </location>
</feature>
<feature type="strand" evidence="5">
    <location>
        <begin position="324"/>
        <end position="326"/>
    </location>
</feature>
<feature type="strand" evidence="5">
    <location>
        <begin position="333"/>
        <end position="342"/>
    </location>
</feature>
<feature type="strand" evidence="5">
    <location>
        <begin position="344"/>
        <end position="348"/>
    </location>
</feature>
<feature type="strand" evidence="5">
    <location>
        <begin position="350"/>
        <end position="353"/>
    </location>
</feature>
<feature type="strand" evidence="5">
    <location>
        <begin position="359"/>
        <end position="371"/>
    </location>
</feature>
<feature type="strand" evidence="6">
    <location>
        <begin position="374"/>
        <end position="376"/>
    </location>
</feature>
<feature type="strand" evidence="5">
    <location>
        <begin position="387"/>
        <end position="397"/>
    </location>
</feature>
<feature type="helix" evidence="5">
    <location>
        <begin position="404"/>
        <end position="406"/>
    </location>
</feature>
<feature type="strand" evidence="5">
    <location>
        <begin position="407"/>
        <end position="415"/>
    </location>
</feature>
<feature type="strand" evidence="5">
    <location>
        <begin position="418"/>
        <end position="420"/>
    </location>
</feature>
<feature type="strand" evidence="5">
    <location>
        <begin position="424"/>
        <end position="430"/>
    </location>
</feature>
<feature type="turn" evidence="5">
    <location>
        <begin position="431"/>
        <end position="434"/>
    </location>
</feature>
<feature type="strand" evidence="5">
    <location>
        <begin position="435"/>
        <end position="439"/>
    </location>
</feature>
<feature type="helix" evidence="5">
    <location>
        <begin position="450"/>
        <end position="452"/>
    </location>
</feature>
<feature type="strand" evidence="5">
    <location>
        <begin position="456"/>
        <end position="460"/>
    </location>
</feature>
<feature type="strand" evidence="5">
    <location>
        <begin position="464"/>
        <end position="467"/>
    </location>
</feature>
<feature type="strand" evidence="5">
    <location>
        <begin position="470"/>
        <end position="480"/>
    </location>
</feature>
<feature type="strand" evidence="5">
    <location>
        <begin position="483"/>
        <end position="488"/>
    </location>
</feature>
<feature type="turn" evidence="5">
    <location>
        <begin position="489"/>
        <end position="492"/>
    </location>
</feature>
<feature type="strand" evidence="5">
    <location>
        <begin position="493"/>
        <end position="498"/>
    </location>
</feature>
<feature type="strand" evidence="5">
    <location>
        <begin position="507"/>
        <end position="514"/>
    </location>
</feature>
<feature type="strand" evidence="5">
    <location>
        <begin position="520"/>
        <end position="532"/>
    </location>
</feature>
<dbReference type="EC" id="3.2.1.26"/>
<dbReference type="EMBL" id="X17604">
    <property type="protein sequence ID" value="CAA35606.1"/>
    <property type="molecule type" value="Genomic_DNA"/>
</dbReference>
<dbReference type="PIR" id="S13528">
    <property type="entry name" value="S13528"/>
</dbReference>
<dbReference type="PDB" id="3KF3">
    <property type="method" value="X-ray"/>
    <property type="resolution" value="1.90 A"/>
    <property type="chains" value="A/B=27-533"/>
</dbReference>
<dbReference type="PDB" id="3KF5">
    <property type="method" value="X-ray"/>
    <property type="resolution" value="2.90 A"/>
    <property type="chains" value="A/B=24-533"/>
</dbReference>
<dbReference type="PDBsum" id="3KF3"/>
<dbReference type="PDBsum" id="3KF5"/>
<dbReference type="SMR" id="P24133"/>
<dbReference type="CAZy" id="GH32">
    <property type="family name" value="Glycoside Hydrolase Family 32"/>
</dbReference>
<dbReference type="GlyCosmos" id="P24133">
    <property type="glycosylation" value="8 sites, No reported glycans"/>
</dbReference>
<dbReference type="BRENDA" id="3.2.1.26">
    <property type="organism ID" value="5620"/>
</dbReference>
<dbReference type="EvolutionaryTrace" id="P24133"/>
<dbReference type="GO" id="GO:0005576">
    <property type="term" value="C:extracellular region"/>
    <property type="evidence" value="ECO:0007669"/>
    <property type="project" value="UniProtKB-ARBA"/>
</dbReference>
<dbReference type="GO" id="GO:0000324">
    <property type="term" value="C:fungal-type vacuole"/>
    <property type="evidence" value="ECO:0007669"/>
    <property type="project" value="TreeGrafter"/>
</dbReference>
<dbReference type="GO" id="GO:0004575">
    <property type="term" value="F:sucrose alpha-glucosidase activity"/>
    <property type="evidence" value="ECO:0007669"/>
    <property type="project" value="TreeGrafter"/>
</dbReference>
<dbReference type="GO" id="GO:0005987">
    <property type="term" value="P:sucrose catabolic process"/>
    <property type="evidence" value="ECO:0007669"/>
    <property type="project" value="UniProtKB-ARBA"/>
</dbReference>
<dbReference type="CDD" id="cd18622">
    <property type="entry name" value="GH32_Inu-like"/>
    <property type="match status" value="1"/>
</dbReference>
<dbReference type="FunFam" id="2.115.10.20:FF:000002">
    <property type="entry name" value="Invertase 2"/>
    <property type="match status" value="1"/>
</dbReference>
<dbReference type="Gene3D" id="2.60.120.560">
    <property type="entry name" value="Exo-inulinase, domain 1"/>
    <property type="match status" value="1"/>
</dbReference>
<dbReference type="Gene3D" id="2.115.10.20">
    <property type="entry name" value="Glycosyl hydrolase domain, family 43"/>
    <property type="match status" value="1"/>
</dbReference>
<dbReference type="InterPro" id="IPR013320">
    <property type="entry name" value="ConA-like_dom_sf"/>
</dbReference>
<dbReference type="InterPro" id="IPR001362">
    <property type="entry name" value="Glyco_hydro_32"/>
</dbReference>
<dbReference type="InterPro" id="IPR018053">
    <property type="entry name" value="Glyco_hydro_32_AS"/>
</dbReference>
<dbReference type="InterPro" id="IPR013189">
    <property type="entry name" value="Glyco_hydro_32_C"/>
</dbReference>
<dbReference type="InterPro" id="IPR013148">
    <property type="entry name" value="Glyco_hydro_32_N"/>
</dbReference>
<dbReference type="InterPro" id="IPR023296">
    <property type="entry name" value="Glyco_hydro_beta-prop_sf"/>
</dbReference>
<dbReference type="PANTHER" id="PTHR42800">
    <property type="entry name" value="EXOINULINASE INUD (AFU_ORTHOLOGUE AFUA_5G00480)"/>
    <property type="match status" value="1"/>
</dbReference>
<dbReference type="PANTHER" id="PTHR42800:SF4">
    <property type="entry name" value="INVERTASE 2"/>
    <property type="match status" value="1"/>
</dbReference>
<dbReference type="Pfam" id="PF08244">
    <property type="entry name" value="Glyco_hydro_32C"/>
    <property type="match status" value="1"/>
</dbReference>
<dbReference type="Pfam" id="PF00251">
    <property type="entry name" value="Glyco_hydro_32N"/>
    <property type="match status" value="1"/>
</dbReference>
<dbReference type="SMART" id="SM00640">
    <property type="entry name" value="Glyco_32"/>
    <property type="match status" value="1"/>
</dbReference>
<dbReference type="SUPFAM" id="SSF75005">
    <property type="entry name" value="Arabinanase/levansucrase/invertase"/>
    <property type="match status" value="1"/>
</dbReference>
<dbReference type="SUPFAM" id="SSF49899">
    <property type="entry name" value="Concanavalin A-like lectins/glucanases"/>
    <property type="match status" value="1"/>
</dbReference>
<dbReference type="PROSITE" id="PS00609">
    <property type="entry name" value="GLYCOSYL_HYDROL_F32"/>
    <property type="match status" value="1"/>
</dbReference>
<sequence length="533" mass="60839">MVQVLSVLVIPLLTLFFGYVASSSIDLSVDTSEYNRPLIHFTPEKGWMNDPNGLFYDKTAKLWHLYFQYNPNATAWGQPLYWGHATSNDLVHWDEHEIAIGPEHDNEGIFSGSIVVDHNNTSGFFNSSIDPNQRIVAIYTNNIPDLQTQDIAFSLDGGYTFTKYENNPVIDVSSNQFRDPKVFWHERFKSMDHGCSEIARVKIQIFGSANLKNWVLNSNFSSGYYGNQYGMSRLIEVPIENSDKSKWVMFLAINPGSPLGGSINQYFVGDFDGFQFVPDDSQTRFVDIGKDFYAFQTFSEVEHGVLGLAWASNWQYADQVPTNPWRSSTSLARNYTLRYVIQMLKLTANIDKSVLPDSINVVDKLKKKNVKLTNKKPIKTNFKGSTGLFDFNITFKVLNLNVSPGKTHFDILINSQELNSSVDSIKIGFDSSQSLFYIDRHIPNVEFPRKQFFTDKLAAYLEPLDYDQDLRVFSLYGIVDKNIIELYFNDGTVAMTNTFFMGEGKYPHDIQIVTDTEEPLFELESVIIRELNK</sequence>
<accession>P24133</accession>
<reference key="1">
    <citation type="journal article" date="1989" name="Curr. Genet.">
        <title>Cloning and sequence analysis of the gene encoding invertase from the yeast Schwanniomyces occidentalis.</title>
        <authorList>
            <person name="Klein R.D."/>
            <person name="Poorman R.A."/>
            <person name="Favreau M.A."/>
            <person name="Shea M.H."/>
            <person name="Hatzenbuhler N.T."/>
            <person name="Nulf S.C."/>
        </authorList>
    </citation>
    <scope>NUCLEOTIDE SEQUENCE [GENOMIC DNA]</scope>
    <source>
        <strain>ATCC 2076</strain>
    </source>
</reference>
<name>INV_SCHOC</name>
<proteinExistence type="evidence at protein level"/>
<protein>
    <recommendedName>
        <fullName>Invertase</fullName>
        <ecNumber>3.2.1.26</ecNumber>
    </recommendedName>
    <alternativeName>
        <fullName>Beta-fructofuranosidase</fullName>
    </alternativeName>
    <alternativeName>
        <fullName>Saccharase</fullName>
    </alternativeName>
</protein>
<evidence type="ECO:0000250" key="1"/>
<evidence type="ECO:0000255" key="2"/>
<evidence type="ECO:0000255" key="3">
    <source>
        <dbReference type="PROSITE-ProRule" id="PRU10067"/>
    </source>
</evidence>
<evidence type="ECO:0000305" key="4"/>
<evidence type="ECO:0007829" key="5">
    <source>
        <dbReference type="PDB" id="3KF3"/>
    </source>
</evidence>
<evidence type="ECO:0007829" key="6">
    <source>
        <dbReference type="PDB" id="3KF5"/>
    </source>
</evidence>
<gene>
    <name type="primary">INV</name>
</gene>
<keyword id="KW-0002">3D-structure</keyword>
<keyword id="KW-0325">Glycoprotein</keyword>
<keyword id="KW-0326">Glycosidase</keyword>
<keyword id="KW-0378">Hydrolase</keyword>
<keyword id="KW-0732">Signal</keyword>
<organism>
    <name type="scientific">Schwanniomyces occidentalis</name>
    <name type="common">Yeast</name>
    <name type="synonym">Debaryomyces occidentalis</name>
    <dbReference type="NCBI Taxonomy" id="27300"/>
    <lineage>
        <taxon>Eukaryota</taxon>
        <taxon>Fungi</taxon>
        <taxon>Dikarya</taxon>
        <taxon>Ascomycota</taxon>
        <taxon>Saccharomycotina</taxon>
        <taxon>Pichiomycetes</taxon>
        <taxon>Debaryomycetaceae</taxon>
        <taxon>Schwanniomyces</taxon>
    </lineage>
</organism>
<comment type="catalytic activity">
    <reaction evidence="3">
        <text>Hydrolysis of terminal non-reducing beta-D-fructofuranoside residues in beta-D-fructofuranosides.</text>
        <dbReference type="EC" id="3.2.1.26"/>
    </reaction>
</comment>
<comment type="similarity">
    <text evidence="4">Belongs to the glycosyl hydrolase 32 family.</text>
</comment>